<dbReference type="EMBL" id="AB019235">
    <property type="protein sequence ID" value="BAA97202.1"/>
    <property type="molecule type" value="Genomic_DNA"/>
</dbReference>
<dbReference type="EMBL" id="CP002688">
    <property type="protein sequence ID" value="AED97602.1"/>
    <property type="molecule type" value="Genomic_DNA"/>
</dbReference>
<dbReference type="EMBL" id="CP002688">
    <property type="protein sequence ID" value="ANM69996.1"/>
    <property type="molecule type" value="Genomic_DNA"/>
</dbReference>
<dbReference type="EMBL" id="DQ056734">
    <property type="protein sequence ID" value="AAY78878.1"/>
    <property type="molecule type" value="mRNA"/>
</dbReference>
<dbReference type="EMBL" id="BT026510">
    <property type="protein sequence ID" value="ABH04617.1"/>
    <property type="molecule type" value="mRNA"/>
</dbReference>
<dbReference type="RefSeq" id="NP_001318864.1">
    <property type="nucleotide sequence ID" value="NM_001345546.1"/>
</dbReference>
<dbReference type="RefSeq" id="NP_201044.1">
    <property type="nucleotide sequence ID" value="NM_125632.2"/>
</dbReference>
<dbReference type="SMR" id="Q9LVA1"/>
<dbReference type="FunCoup" id="Q9LVA1">
    <property type="interactions" value="1"/>
</dbReference>
<dbReference type="IntAct" id="Q9LVA1">
    <property type="interactions" value="2"/>
</dbReference>
<dbReference type="STRING" id="3702.Q9LVA1"/>
<dbReference type="PaxDb" id="3702-AT5G62380.1"/>
<dbReference type="ProteomicsDB" id="236813"/>
<dbReference type="EnsemblPlants" id="AT5G62380.1">
    <property type="protein sequence ID" value="AT5G62380.1"/>
    <property type="gene ID" value="AT5G62380"/>
</dbReference>
<dbReference type="EnsemblPlants" id="AT5G62380.2">
    <property type="protein sequence ID" value="AT5G62380.2"/>
    <property type="gene ID" value="AT5G62380"/>
</dbReference>
<dbReference type="GeneID" id="836359"/>
<dbReference type="Gramene" id="AT5G62380.1">
    <property type="protein sequence ID" value="AT5G62380.1"/>
    <property type="gene ID" value="AT5G62380"/>
</dbReference>
<dbReference type="Gramene" id="AT5G62380.2">
    <property type="protein sequence ID" value="AT5G62380.2"/>
    <property type="gene ID" value="AT5G62380"/>
</dbReference>
<dbReference type="KEGG" id="ath:AT5G62380"/>
<dbReference type="Araport" id="AT5G62380"/>
<dbReference type="TAIR" id="AT5G62380">
    <property type="gene designation" value="NAC101"/>
</dbReference>
<dbReference type="eggNOG" id="ENOG502QT6P">
    <property type="taxonomic scope" value="Eukaryota"/>
</dbReference>
<dbReference type="HOGENOM" id="CLU_035664_1_0_1"/>
<dbReference type="InParanoid" id="Q9LVA1"/>
<dbReference type="OMA" id="ESNWFTH"/>
<dbReference type="OrthoDB" id="1056159at2759"/>
<dbReference type="PhylomeDB" id="Q9LVA1"/>
<dbReference type="PRO" id="PR:Q9LVA1"/>
<dbReference type="Proteomes" id="UP000006548">
    <property type="component" value="Chromosome 5"/>
</dbReference>
<dbReference type="ExpressionAtlas" id="Q9LVA1">
    <property type="expression patterns" value="baseline and differential"/>
</dbReference>
<dbReference type="GO" id="GO:0005634">
    <property type="term" value="C:nucleus"/>
    <property type="evidence" value="ECO:0000314"/>
    <property type="project" value="TAIR"/>
</dbReference>
<dbReference type="GO" id="GO:0009531">
    <property type="term" value="C:secondary cell wall"/>
    <property type="evidence" value="ECO:0000315"/>
    <property type="project" value="UniProtKB"/>
</dbReference>
<dbReference type="GO" id="GO:0003700">
    <property type="term" value="F:DNA-binding transcription factor activity"/>
    <property type="evidence" value="ECO:0000314"/>
    <property type="project" value="UniProtKB"/>
</dbReference>
<dbReference type="GO" id="GO:0042803">
    <property type="term" value="F:protein homodimerization activity"/>
    <property type="evidence" value="ECO:0000314"/>
    <property type="project" value="UniProtKB"/>
</dbReference>
<dbReference type="GO" id="GO:0043565">
    <property type="term" value="F:sequence-specific DNA binding"/>
    <property type="evidence" value="ECO:0000314"/>
    <property type="project" value="UniProtKB"/>
</dbReference>
<dbReference type="GO" id="GO:0000976">
    <property type="term" value="F:transcription cis-regulatory region binding"/>
    <property type="evidence" value="ECO:0000353"/>
    <property type="project" value="TAIR"/>
</dbReference>
<dbReference type="GO" id="GO:0071555">
    <property type="term" value="P:cell wall organization"/>
    <property type="evidence" value="ECO:0007669"/>
    <property type="project" value="UniProtKB-KW"/>
</dbReference>
<dbReference type="GO" id="GO:0090058">
    <property type="term" value="P:metaxylem development"/>
    <property type="evidence" value="ECO:0000315"/>
    <property type="project" value="UniProtKB"/>
</dbReference>
<dbReference type="GO" id="GO:0045893">
    <property type="term" value="P:positive regulation of DNA-templated transcription"/>
    <property type="evidence" value="ECO:0000314"/>
    <property type="project" value="TAIR"/>
</dbReference>
<dbReference type="GO" id="GO:0043068">
    <property type="term" value="P:positive regulation of programmed cell death"/>
    <property type="evidence" value="ECO:0000315"/>
    <property type="project" value="UniProtKB"/>
</dbReference>
<dbReference type="GO" id="GO:0010981">
    <property type="term" value="P:regulation of cell wall macromolecule metabolic process"/>
    <property type="evidence" value="ECO:0000315"/>
    <property type="project" value="UniProtKB"/>
</dbReference>
<dbReference type="GO" id="GO:0006355">
    <property type="term" value="P:regulation of DNA-templated transcription"/>
    <property type="evidence" value="ECO:0000304"/>
    <property type="project" value="TAIR"/>
</dbReference>
<dbReference type="GO" id="GO:0009737">
    <property type="term" value="P:response to abscisic acid"/>
    <property type="evidence" value="ECO:0000270"/>
    <property type="project" value="TAIR"/>
</dbReference>
<dbReference type="GO" id="GO:0009733">
    <property type="term" value="P:response to auxin"/>
    <property type="evidence" value="ECO:0000270"/>
    <property type="project" value="UniProtKB"/>
</dbReference>
<dbReference type="GO" id="GO:0009741">
    <property type="term" value="P:response to brassinosteroid"/>
    <property type="evidence" value="ECO:0000270"/>
    <property type="project" value="TAIR"/>
</dbReference>
<dbReference type="GO" id="GO:0009735">
    <property type="term" value="P:response to cytokinin"/>
    <property type="evidence" value="ECO:0000270"/>
    <property type="project" value="TAIR"/>
</dbReference>
<dbReference type="GO" id="GO:0009620">
    <property type="term" value="P:response to fungus"/>
    <property type="evidence" value="ECO:0000314"/>
    <property type="project" value="UniProtKB"/>
</dbReference>
<dbReference type="GO" id="GO:0045491">
    <property type="term" value="P:xylan metabolic process"/>
    <property type="evidence" value="ECO:0000315"/>
    <property type="project" value="UniProtKB"/>
</dbReference>
<dbReference type="GO" id="GO:0010089">
    <property type="term" value="P:xylem development"/>
    <property type="evidence" value="ECO:0000315"/>
    <property type="project" value="TAIR"/>
</dbReference>
<dbReference type="GO" id="GO:0048759">
    <property type="term" value="P:xylem vessel member cell differentiation"/>
    <property type="evidence" value="ECO:0000315"/>
    <property type="project" value="UniProtKB"/>
</dbReference>
<dbReference type="FunFam" id="2.170.150.80:FF:000003">
    <property type="entry name" value="NAC domain-containing protein"/>
    <property type="match status" value="1"/>
</dbReference>
<dbReference type="Gene3D" id="2.170.150.80">
    <property type="entry name" value="NAC domain"/>
    <property type="match status" value="1"/>
</dbReference>
<dbReference type="InterPro" id="IPR003441">
    <property type="entry name" value="NAC-dom"/>
</dbReference>
<dbReference type="InterPro" id="IPR036093">
    <property type="entry name" value="NAC_dom_sf"/>
</dbReference>
<dbReference type="PANTHER" id="PTHR31744:SF230">
    <property type="entry name" value="NAC DOMAIN-CONTAINING PROTEIN"/>
    <property type="match status" value="1"/>
</dbReference>
<dbReference type="PANTHER" id="PTHR31744">
    <property type="entry name" value="PROTEIN CUP-SHAPED COTYLEDON 2-RELATED"/>
    <property type="match status" value="1"/>
</dbReference>
<dbReference type="Pfam" id="PF02365">
    <property type="entry name" value="NAM"/>
    <property type="match status" value="1"/>
</dbReference>
<dbReference type="SUPFAM" id="SSF101941">
    <property type="entry name" value="NAC domain"/>
    <property type="match status" value="1"/>
</dbReference>
<dbReference type="PROSITE" id="PS51005">
    <property type="entry name" value="NAC"/>
    <property type="match status" value="1"/>
</dbReference>
<organism evidence="19">
    <name type="scientific">Arabidopsis thaliana</name>
    <name type="common">Mouse-ear cress</name>
    <dbReference type="NCBI Taxonomy" id="3702"/>
    <lineage>
        <taxon>Eukaryota</taxon>
        <taxon>Viridiplantae</taxon>
        <taxon>Streptophyta</taxon>
        <taxon>Embryophyta</taxon>
        <taxon>Tracheophyta</taxon>
        <taxon>Spermatophyta</taxon>
        <taxon>Magnoliopsida</taxon>
        <taxon>eudicotyledons</taxon>
        <taxon>Gunneridae</taxon>
        <taxon>Pentapetalae</taxon>
        <taxon>rosids</taxon>
        <taxon>malvids</taxon>
        <taxon>Brassicales</taxon>
        <taxon>Brassicaceae</taxon>
        <taxon>Camelineae</taxon>
        <taxon>Arabidopsis</taxon>
    </lineage>
</organism>
<comment type="function">
    <text evidence="3 4 6 7 8 9 10 11 12">Transcription activator that binds to the secondary wall NAC binding element (SNBE), 5'-(T/A)NN(C/T)(T/C/G)TNNNNNNNA(A/C)GN(A/C/T)(A/T)-3', and to the tracheary elements (TE) specific regulating cis-element (TERE), 5'-CTTNAAAGCNA-3', in the promoter of target genes (e.g. genes involved in secondary wall biosynthesis, cell wall modification such as xylan accumulation, and programmed cell death) (PubMed:20488898, PubMed:20935069, PubMed:20952636). Involved in xylem formation in roots and shoots, especially regulating metaxylem vessel differentiation by promoting immature xylem vessel-specific genes expression, especially genes regulating programmed cell death (PCD) and secondary wall formation in tracheary elements (TE) (PubMed:16103214, PubMed:20488898, PubMed:20952636). Can activate MYB25, MYB46, MYB58, MYB63, MYB83, MYB103, CESA4, LBD15, LBD30, ERF115, XCP1, XCP2, NAC010/SND3, KNAT7, ASL19 and ASL20 expression (PubMed:17890373, PubMed:18952777, PubMed:19088331, PubMed:19122102, PubMed:19808805, PubMed:20935069, PubMed:20952636).</text>
</comment>
<comment type="subunit">
    <text evidence="5">Homodimer.</text>
</comment>
<comment type="subcellular location">
    <subcellularLocation>
        <location evidence="1 3">Nucleus</location>
    </subcellularLocation>
</comment>
<comment type="tissue specificity">
    <text evidence="3 5 6">Expressed in root inner metaxylem vessels and in hypocotyl vessels (PubMed:18445131, PubMed:18952777). Present in root developing xylems (PubMed:16103214). Accumulates in the xylem but not in interfascicular fibers or pith cells in inflorescence stems. Absent from secondary xylem in roots (PubMed:18952777).</text>
</comment>
<comment type="developmental stage">
    <text evidence="3">Up-regulated during xylem vessel element formation. Expressed preferentially in procambial cells adjacent to root meristem, especially newly proliferating cells derived presumably from pericycle.</text>
</comment>
<comment type="induction">
    <text evidence="3 13">By brassinosteroids (e.g. brassinolide BL), auxin (e.g. 2,4-dichlorphenoxyacetic acid 2,4-D) and cytokinin (e.g. kinetin), with a synergistic effect (PubMed:16103214). Accumulates during infection by the soilborne fungal pathogen Verticillium longisporum, especially in tissues undergoing de novo xylem formation (PubMed:23023171).</text>
</comment>
<comment type="domain">
    <text evidence="1">The NAC domain includes a DNA binding domain and a dimerization domain.</text>
</comment>
<comment type="disruption phenotype">
    <text evidence="3">Defects in metaxylem vessel formation in seedling roots.</text>
</comment>
<comment type="similarity">
    <text evidence="16">Belongs to the plant vascular related NAC-domain protein family.</text>
</comment>
<proteinExistence type="evidence at transcript level"/>
<accession>Q9LVA1</accession>
<gene>
    <name evidence="14" type="primary">NAC101</name>
    <name evidence="15" type="synonym">VND6</name>
    <name evidence="17" type="ordered locus">At5g62380</name>
    <name evidence="18" type="ORF">MMI9.21</name>
</gene>
<keyword id="KW-0010">Activator</keyword>
<keyword id="KW-0961">Cell wall biogenesis/degradation</keyword>
<keyword id="KW-0217">Developmental protein</keyword>
<keyword id="KW-0238">DNA-binding</keyword>
<keyword id="KW-0539">Nucleus</keyword>
<keyword id="KW-1185">Reference proteome</keyword>
<keyword id="KW-0804">Transcription</keyword>
<keyword id="KW-0805">Transcription regulation</keyword>
<name>NC101_ARATH</name>
<reference key="1">
    <citation type="journal article" date="2000" name="DNA Res.">
        <title>Structural analysis of Arabidopsis thaliana chromosome 5. X. Sequence features of the regions of 3,076,755 bp covered by sixty P1 and TAC clones.</title>
        <authorList>
            <person name="Sato S."/>
            <person name="Nakamura Y."/>
            <person name="Kaneko T."/>
            <person name="Katoh T."/>
            <person name="Asamizu E."/>
            <person name="Kotani H."/>
            <person name="Tabata S."/>
        </authorList>
    </citation>
    <scope>NUCLEOTIDE SEQUENCE [LARGE SCALE GENOMIC DNA]</scope>
    <source>
        <strain>cv. Columbia</strain>
    </source>
</reference>
<reference key="2">
    <citation type="journal article" date="2017" name="Plant J.">
        <title>Araport11: a complete reannotation of the Arabidopsis thaliana reference genome.</title>
        <authorList>
            <person name="Cheng C.Y."/>
            <person name="Krishnakumar V."/>
            <person name="Chan A.P."/>
            <person name="Thibaud-Nissen F."/>
            <person name="Schobel S."/>
            <person name="Town C.D."/>
        </authorList>
    </citation>
    <scope>GENOME REANNOTATION</scope>
    <source>
        <strain>cv. Columbia</strain>
    </source>
</reference>
<reference key="3">
    <citation type="journal article" date="2006" name="Plant Biotechnol. J.">
        <title>Simultaneous high-throughput recombinational cloning of open reading frames in closed and open configurations.</title>
        <authorList>
            <person name="Underwood B.A."/>
            <person name="Vanderhaeghen R."/>
            <person name="Whitford R."/>
            <person name="Town C.D."/>
            <person name="Hilson P."/>
        </authorList>
    </citation>
    <scope>NUCLEOTIDE SEQUENCE [LARGE SCALE MRNA]</scope>
    <source>
        <strain>cv. Columbia</strain>
    </source>
</reference>
<reference key="4">
    <citation type="submission" date="2006-08" db="EMBL/GenBank/DDBJ databases">
        <title>Arabidopsis ORF Clones.</title>
        <authorList>
            <person name="Quinitio C."/>
            <person name="Chen H."/>
            <person name="Kim C.J."/>
            <person name="Shinn P."/>
            <person name="Ecker J.R."/>
        </authorList>
    </citation>
    <scope>NUCLEOTIDE SEQUENCE [LARGE SCALE MRNA]</scope>
    <source>
        <strain>cv. Columbia</strain>
    </source>
</reference>
<reference key="5">
    <citation type="journal article" date="2003" name="DNA Res.">
        <title>Comprehensive analysis of NAC family genes in Oryza sativa and Arabidopsis thaliana.</title>
        <authorList>
            <person name="Ooka H."/>
            <person name="Satoh K."/>
            <person name="Doi K."/>
            <person name="Nagata T."/>
            <person name="Otomo Y."/>
            <person name="Murakami K."/>
            <person name="Matsubara K."/>
            <person name="Osato N."/>
            <person name="Kawai J."/>
            <person name="Carninci P."/>
            <person name="Hayashizaki Y."/>
            <person name="Suzuki K."/>
            <person name="Kojima K."/>
            <person name="Takahara Y."/>
            <person name="Yamamoto K."/>
            <person name="Kikuchi S."/>
        </authorList>
    </citation>
    <scope>GENE FAMILY</scope>
    <scope>NOMENCLATURE</scope>
</reference>
<reference key="6">
    <citation type="journal article" date="2005" name="Genes Dev.">
        <title>Transcription switches for protoxylem and metaxylem vessel formation.</title>
        <authorList>
            <person name="Kubo M."/>
            <person name="Udagawa M."/>
            <person name="Nishikubo N."/>
            <person name="Horiguchi G."/>
            <person name="Yamaguchi M."/>
            <person name="Ito J."/>
            <person name="Mimura T."/>
            <person name="Fukuda H."/>
            <person name="Demura T."/>
        </authorList>
    </citation>
    <scope>FUNCTION</scope>
    <scope>DISRUPTION PHENOTYPE</scope>
    <scope>DEVELOPMENTAL STAGE</scope>
    <scope>TISSUE SPECIFICITY</scope>
    <scope>SUBCELLULAR LOCATION</scope>
    <scope>INDUCTION BY BRASSINOSTEROIDS; AUXIN AND CYTOKININ</scope>
    <scope>GENE FAMILY</scope>
    <scope>NOMENCLATURE</scope>
</reference>
<reference key="7">
    <citation type="journal article" date="2007" name="Plant Cell">
        <title>The MYB46 transcription factor is a direct target of SND1 and regulates secondary wall biosynthesis in Arabidopsis.</title>
        <authorList>
            <person name="Zhong R."/>
            <person name="Richardson E.A."/>
            <person name="Ye Z.-H."/>
        </authorList>
    </citation>
    <scope>FUNCTION</scope>
</reference>
<reference key="8">
    <citation type="journal article" date="2008" name="Plant J.">
        <title>Vascular-related NAC-DOMAIN7 is involved in the differentiation of all types of xylem vessels in Arabidopsis roots and shoots.</title>
        <authorList>
            <person name="Yamaguchi M."/>
            <person name="Kubo M."/>
            <person name="Fukuda H."/>
            <person name="Demura T."/>
        </authorList>
    </citation>
    <scope>TISSUE SPECIFICITY</scope>
    <scope>HOMODIMER</scope>
    <source>
        <strain>cv. Columbia</strain>
    </source>
</reference>
<reference key="9">
    <citation type="journal article" date="2008" name="Plant Cell">
        <title>A battery of transcription factors involved in the regulation of secondary cell wall biosynthesis in Arabidopsis.</title>
        <authorList>
            <person name="Zhong R."/>
            <person name="Lee C."/>
            <person name="Zhou J."/>
            <person name="McCarthy R.L."/>
            <person name="Ye Z.H."/>
        </authorList>
    </citation>
    <scope>FUNCTION</scope>
    <scope>TISSUE SPECIFICITY</scope>
</reference>
<reference key="10">
    <citation type="journal article" date="2008" name="Plant Cell">
        <title>ASYMMETRIC LEAVES2-LIKE19/LATERAL ORGAN BOUNDARIES DOMAIN30 and ASL20/LBD18 regulate tracheary element differentiation in Arabidopsis.</title>
        <authorList>
            <person name="Soyano T."/>
            <person name="Thitamadee S."/>
            <person name="Machida Y."/>
            <person name="Chua N.-H."/>
        </authorList>
    </citation>
    <scope>FUNCTION</scope>
</reference>
<reference key="11">
    <citation type="journal article" date="2009" name="Plant Cell">
        <title>MYB58 and MYB63 are transcriptional activators of the lignin biosynthetic pathway during secondary cell wall formation in Arabidopsis.</title>
        <authorList>
            <person name="Zhou J."/>
            <person name="Lee C."/>
            <person name="Zhong R."/>
            <person name="Ye Z.-H."/>
        </authorList>
    </citation>
    <scope>FUNCTION</scope>
    <source>
        <strain>cv. Columbia</strain>
    </source>
</reference>
<reference key="12">
    <citation type="journal article" date="2009" name="Plant Cell Physiol.">
        <title>MYB83 is a direct target of SND1 and acts redundantly with MYB46 in the regulation of secondary cell wall biosynthesis in Arabidopsis.</title>
        <authorList>
            <person name="McCarthy R.L."/>
            <person name="Zhong R."/>
            <person name="Ye Z.-H."/>
        </authorList>
    </citation>
    <scope>FUNCTION</scope>
</reference>
<reference key="13">
    <citation type="journal article" date="2010" name="Mol. Plant">
        <title>Global analysis of direct targets of secondary wall NAC master switches in Arabidopsis.</title>
        <authorList>
            <person name="Zhong R."/>
            <person name="Lee C."/>
            <person name="Ye Z.-H."/>
        </authorList>
    </citation>
    <scope>FUNCTION</scope>
</reference>
<reference key="14">
    <citation type="journal article" date="2010" name="Plant Cell">
        <title>Arabidopsis VASCULAR-RELATED NAC-DOMAIN6 directly regulates the genes that govern programmed cell death and secondary wall formation during xylem differentiation.</title>
        <authorList>
            <person name="Ohashi-Ito K."/>
            <person name="Oda Y."/>
            <person name="Fukuda H."/>
        </authorList>
    </citation>
    <scope>FUNCTION</scope>
</reference>
<reference key="15">
    <citation type="journal article" date="2010" name="Plant Physiol.">
        <title>VASCULAR-RELATED NAC-DOMAIN6 and VASCULAR-RELATED NAC-DOMAIN7 effectively induce transdifferentiation into xylem vessel elements under control of an induction system.</title>
        <authorList>
            <person name="Yamaguchi M."/>
            <person name="Goue N."/>
            <person name="Igarashi H."/>
            <person name="Ohtani M."/>
            <person name="Nakano Y."/>
            <person name="Mortimer J.C."/>
            <person name="Nishikubo N."/>
            <person name="Kubo M."/>
            <person name="Katayama Y."/>
            <person name="Kakegawa K."/>
            <person name="Dupree P."/>
            <person name="Demura T."/>
        </authorList>
    </citation>
    <scope>FUNCTION</scope>
</reference>
<reference key="16">
    <citation type="journal article" date="2011" name="Plant Signal. Behav.">
        <title>Secondary wall NAC binding element (SNBE), a key cis-acting element required for target gene activation by secondary wall NAC master switches.</title>
        <authorList>
            <person name="McCarthy R.L."/>
            <person name="Zhong R."/>
            <person name="Ye Z.-H."/>
        </authorList>
    </citation>
    <scope>REVIEW</scope>
</reference>
<reference key="17">
    <citation type="journal article" date="2012" name="Plant Cell">
        <title>Verticillium infection triggers VASCULAR-RELATED NAC DOMAIN7-dependent de novo xylem formation and enhances drought tolerance in Arabidopsis.</title>
        <authorList>
            <person name="Reusche M."/>
            <person name="Thole K."/>
            <person name="Janz D."/>
            <person name="Truskina J."/>
            <person name="Rindfleisch S."/>
            <person name="Drubert C."/>
            <person name="Polle A."/>
            <person name="Lipka V."/>
            <person name="Teichmann T."/>
        </authorList>
    </citation>
    <scope>INDUCTION BY VERTICILLIUM LONGISPORUM</scope>
    <source>
        <strain>cv. Columbia</strain>
    </source>
</reference>
<protein>
    <recommendedName>
        <fullName evidence="14">NAC domain-containing protein 101</fullName>
        <shortName evidence="14">ANAC101</shortName>
    </recommendedName>
    <alternativeName>
        <fullName evidence="15">Protein VASCULAR RELATED NAC-DOMAIN 6</fullName>
    </alternativeName>
</protein>
<evidence type="ECO:0000255" key="1">
    <source>
        <dbReference type="PROSITE-ProRule" id="PRU00353"/>
    </source>
</evidence>
<evidence type="ECO:0000256" key="2">
    <source>
        <dbReference type="SAM" id="MobiDB-lite"/>
    </source>
</evidence>
<evidence type="ECO:0000269" key="3">
    <source>
    </source>
</evidence>
<evidence type="ECO:0000269" key="4">
    <source>
    </source>
</evidence>
<evidence type="ECO:0000269" key="5">
    <source>
    </source>
</evidence>
<evidence type="ECO:0000269" key="6">
    <source>
    </source>
</evidence>
<evidence type="ECO:0000269" key="7">
    <source>
    </source>
</evidence>
<evidence type="ECO:0000269" key="8">
    <source>
    </source>
</evidence>
<evidence type="ECO:0000269" key="9">
    <source>
    </source>
</evidence>
<evidence type="ECO:0000269" key="10">
    <source>
    </source>
</evidence>
<evidence type="ECO:0000269" key="11">
    <source>
    </source>
</evidence>
<evidence type="ECO:0000269" key="12">
    <source>
    </source>
</evidence>
<evidence type="ECO:0000269" key="13">
    <source>
    </source>
</evidence>
<evidence type="ECO:0000303" key="14">
    <source>
    </source>
</evidence>
<evidence type="ECO:0000303" key="15">
    <source>
    </source>
</evidence>
<evidence type="ECO:0000305" key="16"/>
<evidence type="ECO:0000312" key="17">
    <source>
        <dbReference type="Araport" id="AT5G62380"/>
    </source>
</evidence>
<evidence type="ECO:0000312" key="18">
    <source>
        <dbReference type="EMBL" id="BAA97202.1"/>
    </source>
</evidence>
<evidence type="ECO:0000312" key="19">
    <source>
        <dbReference type="Proteomes" id="UP000006548"/>
    </source>
</evidence>
<sequence>MESLAHIPPGYRFHPTDEELVDYYLKNKVAFPGMQVDVIKDVDLYKIEPWDIQELCGRGTGEEREWYFFSHKDKKYPTGTRTNRATGSGFWKATGRDKAIYSKQELVGMRKTLVFYKGRAPNGQKSDWIMHEYRLETDENGPPHEEGWVVCRAFKKKLTTMNYNNPRTMMGSSSGQESNWFTQQMDVGNGNYYHLPDLESPRMFQGSSSSSLSSLHQNDQDPYGVVLSTINATPTTIMQRDDGHVITNDDDHMIMMNTSTGDHHQSGLLVNDDHNDQVMDWQTLDKFVASQLIMSQEEEEVNKDPSDNSSNETFHHLSEEQAATMVSMNASSSSSPCSFYSWAQNTHT</sequence>
<feature type="chain" id="PRO_0000433123" description="NAC domain-containing protein 101">
    <location>
        <begin position="1"/>
        <end position="348"/>
    </location>
</feature>
<feature type="domain" description="NAC" evidence="1">
    <location>
        <begin position="7"/>
        <end position="156"/>
    </location>
</feature>
<feature type="DNA-binding region" evidence="1">
    <location>
        <begin position="107"/>
        <end position="162"/>
    </location>
</feature>
<feature type="region of interest" description="Disordered" evidence="2">
    <location>
        <begin position="325"/>
        <end position="348"/>
    </location>
</feature>
<feature type="compositionally biased region" description="Low complexity" evidence="2">
    <location>
        <begin position="327"/>
        <end position="341"/>
    </location>
</feature>